<evidence type="ECO:0000255" key="1"/>
<evidence type="ECO:0000256" key="2">
    <source>
        <dbReference type="SAM" id="MobiDB-lite"/>
    </source>
</evidence>
<organism>
    <name type="scientific">Oncorhynchus mykiss</name>
    <name type="common">Rainbow trout</name>
    <name type="synonym">Salmo gairdneri</name>
    <dbReference type="NCBI Taxonomy" id="8022"/>
    <lineage>
        <taxon>Eukaryota</taxon>
        <taxon>Metazoa</taxon>
        <taxon>Chordata</taxon>
        <taxon>Craniata</taxon>
        <taxon>Vertebrata</taxon>
        <taxon>Euteleostomi</taxon>
        <taxon>Actinopterygii</taxon>
        <taxon>Neopterygii</taxon>
        <taxon>Teleostei</taxon>
        <taxon>Protacanthopterygii</taxon>
        <taxon>Salmoniformes</taxon>
        <taxon>Salmonidae</taxon>
        <taxon>Salmoninae</taxon>
        <taxon>Oncorhynchus</taxon>
    </lineage>
</organism>
<name>PSGP_ONCMY</name>
<comment type="function">
    <text>In response to egg activation, PSGP is discharged by exocytosis into the perivitelline space, where it undergoes rapid proteolysis into glycotridecapeptides. During fertilization and/or early development the glycotridecapeptides prevent polyspermy or are involved in the formation of a fertilization membrane.</text>
</comment>
<comment type="tissue specificity">
    <text>Cortical alveoli of immature ovaries.</text>
</comment>
<comment type="PTM">
    <text>Most sialic acid residues exist in the form of polysialyl groups partly capped with deaminoneuraminic acid.</text>
</comment>
<comment type="miscellaneous">
    <text>The core of the PSGP protein contains an average of 25 exact tandem repeats of the same glycotridecapeptide, where the Ser and the Thr residues are attachment sites of a polysialylglycan chain.</text>
</comment>
<comment type="miscellaneous">
    <text>Multiple genes for PSGP are transcribed into multiple mRNAs containing diverged numbers of repeating units.</text>
</comment>
<keyword id="KW-0903">Direct protein sequencing</keyword>
<keyword id="KW-0325">Glycoprotein</keyword>
<keyword id="KW-0677">Repeat</keyword>
<keyword id="KW-0732">Signal</keyword>
<dbReference type="EMBL" id="J04051">
    <property type="protein sequence ID" value="AAA49548.1"/>
    <property type="molecule type" value="mRNA"/>
</dbReference>
<dbReference type="PIR" id="S08207">
    <property type="entry name" value="S08207"/>
</dbReference>
<dbReference type="RefSeq" id="NP_001118159.1">
    <property type="nucleotide sequence ID" value="NM_001124687.1"/>
</dbReference>
<dbReference type="RefSeq" id="XP_036819866.1">
    <property type="nucleotide sequence ID" value="XM_036963971.1"/>
</dbReference>
<dbReference type="RefSeq" id="XP_036821325.1">
    <property type="nucleotide sequence ID" value="XM_036965430.1"/>
</dbReference>
<dbReference type="RefSeq" id="XP_036830360.1">
    <property type="nucleotide sequence ID" value="XM_036974465.1"/>
</dbReference>
<dbReference type="RefSeq" id="XP_036830362.1">
    <property type="nucleotide sequence ID" value="XM_036974467.1"/>
</dbReference>
<dbReference type="Ensembl" id="ENSOMYT00000118057.1">
    <property type="protein sequence ID" value="ENSOMYP00000120621.1"/>
    <property type="gene ID" value="ENSOMYG00000071125.1"/>
</dbReference>
<dbReference type="Ensembl" id="ENSOMYT00000122036.1">
    <property type="protein sequence ID" value="ENSOMYP00000111858.1"/>
    <property type="gene ID" value="ENSOMYG00000062830.1"/>
</dbReference>
<dbReference type="Ensembl" id="ENSOMYT00000129702.1">
    <property type="protein sequence ID" value="ENSOMYP00000113243.1"/>
    <property type="gene ID" value="ENSOMYG00000064337.1"/>
</dbReference>
<dbReference type="Ensembl" id="ENSOMYT00000144330.1">
    <property type="protein sequence ID" value="ENSOMYP00000133643.1"/>
    <property type="gene ID" value="ENSOMYG00000069809.1"/>
</dbReference>
<dbReference type="Ensembl" id="ENSOMYT00000146922.1">
    <property type="protein sequence ID" value="ENSOMYP00000137352.1"/>
    <property type="gene ID" value="ENSOMYG00000070369.1"/>
</dbReference>
<dbReference type="Ensembl" id="ENSOMYT00000157122.1">
    <property type="protein sequence ID" value="ENSOMYP00000121029.1"/>
    <property type="gene ID" value="ENSOMYG00000068122.1"/>
</dbReference>
<dbReference type="GeneID" id="100136727"/>
<dbReference type="GeneID" id="118944466"/>
<dbReference type="GeneID" id="118944747"/>
<dbReference type="GeneID" id="118959989"/>
<dbReference type="GeneID" id="118959990"/>
<dbReference type="KEGG" id="omy:100136727"/>
<dbReference type="GeneTree" id="ENSGT01010000223036"/>
<dbReference type="OrthoDB" id="8963097at2759"/>
<dbReference type="Proteomes" id="UP000694395">
    <property type="component" value="Chromosome 2"/>
</dbReference>
<dbReference type="Proteomes" id="UP000694395">
    <property type="component" value="Chromosome 3"/>
</dbReference>
<dbReference type="InterPro" id="IPR009900">
    <property type="entry name" value="PSGP"/>
</dbReference>
<dbReference type="Pfam" id="PF07276">
    <property type="entry name" value="PSGP"/>
    <property type="match status" value="33"/>
</dbReference>
<reference key="1">
    <citation type="journal article" date="1988" name="J. Biol. Chem.">
        <title>Molecular cloning and characterization of cDNAs coding for apo-polysialoglycoprotein of rainbow trout eggs. Multiple mRNA species transcribed from multiple genes contain diverged numbers of exact 39-base (13-amino acid) repeats.</title>
        <authorList>
            <person name="Sorimachi H."/>
            <person name="Emori Y."/>
            <person name="Kawasaki H."/>
            <person name="Kitajima K."/>
            <person name="Inoue S."/>
            <person name="Suzuki K."/>
            <person name="Inoue Y."/>
        </authorList>
    </citation>
    <scope>NUCLEOTIDE SEQUENCE [MRNA]</scope>
    <source>
        <tissue>Egg</tissue>
    </source>
</reference>
<reference key="2">
    <citation type="journal article" date="1986" name="J. Biol. Chem.">
        <title>Polysialoglycoproteins of Salmonidae fish eggs. Complete structure of 200-kDa polysialoglycoprotein from the unfertilized eggs of rainbow trout (Salmo gairdneri).</title>
        <authorList>
            <person name="Kitajima K."/>
            <person name="Inoue Y."/>
            <person name="Inoue S."/>
        </authorList>
    </citation>
    <scope>PROTEIN SEQUENCE OF 174-510</scope>
    <source>
        <tissue>Egg</tissue>
    </source>
</reference>
<reference key="3">
    <citation type="journal article" date="1990" name="J. Mol. Biol.">
        <title>Organization and primary sequence of multiple genes coding for the apopolysialoglycoproteins of rainbow trout.</title>
        <authorList>
            <person name="Sorimachi H."/>
            <person name="Emori Y."/>
            <person name="Kawasaki H."/>
            <person name="Suzuki K."/>
            <person name="Inoue Y."/>
        </authorList>
    </citation>
    <scope>GENE FAMILY ORGANIZATION</scope>
</reference>
<feature type="signal peptide" evidence="1">
    <location>
        <begin position="1"/>
        <end position="21"/>
    </location>
</feature>
<feature type="propeptide" id="PRO_0000022167">
    <location>
        <begin position="22"/>
        <end position="120"/>
    </location>
</feature>
<feature type="chain" id="PRO_0000022168" description="Polysialoglycoprotein">
    <location>
        <begin position="121"/>
        <end position="536"/>
    </location>
</feature>
<feature type="propeptide" id="PRO_0000022169">
    <location>
        <begin position="537"/>
        <end position="542"/>
    </location>
</feature>
<feature type="repeat" description="1">
    <location>
        <begin position="121"/>
        <end position="133"/>
    </location>
</feature>
<feature type="repeat" description="2">
    <location>
        <begin position="134"/>
        <end position="146"/>
    </location>
</feature>
<feature type="repeat" description="3">
    <location>
        <begin position="147"/>
        <end position="159"/>
    </location>
</feature>
<feature type="repeat" description="4">
    <location>
        <begin position="160"/>
        <end position="172"/>
    </location>
</feature>
<feature type="repeat" description="5">
    <location>
        <begin position="173"/>
        <end position="185"/>
    </location>
</feature>
<feature type="repeat" description="6">
    <location>
        <begin position="186"/>
        <end position="198"/>
    </location>
</feature>
<feature type="repeat" description="7">
    <location>
        <begin position="199"/>
        <end position="211"/>
    </location>
</feature>
<feature type="repeat" description="8">
    <location>
        <begin position="212"/>
        <end position="224"/>
    </location>
</feature>
<feature type="repeat" description="9">
    <location>
        <begin position="225"/>
        <end position="237"/>
    </location>
</feature>
<feature type="repeat" description="10">
    <location>
        <begin position="238"/>
        <end position="250"/>
    </location>
</feature>
<feature type="repeat" description="11">
    <location>
        <begin position="251"/>
        <end position="263"/>
    </location>
</feature>
<feature type="repeat" description="12">
    <location>
        <begin position="264"/>
        <end position="276"/>
    </location>
</feature>
<feature type="repeat" description="13">
    <location>
        <begin position="277"/>
        <end position="289"/>
    </location>
</feature>
<feature type="repeat" description="14">
    <location>
        <begin position="290"/>
        <end position="302"/>
    </location>
</feature>
<feature type="repeat" description="15">
    <location>
        <begin position="303"/>
        <end position="315"/>
    </location>
</feature>
<feature type="repeat" description="16">
    <location>
        <begin position="316"/>
        <end position="328"/>
    </location>
</feature>
<feature type="repeat" description="17">
    <location>
        <begin position="329"/>
        <end position="341"/>
    </location>
</feature>
<feature type="repeat" description="18">
    <location>
        <begin position="342"/>
        <end position="354"/>
    </location>
</feature>
<feature type="repeat" description="19">
    <location>
        <begin position="355"/>
        <end position="367"/>
    </location>
</feature>
<feature type="repeat" description="20">
    <location>
        <begin position="368"/>
        <end position="380"/>
    </location>
</feature>
<feature type="repeat" description="21">
    <location>
        <begin position="381"/>
        <end position="393"/>
    </location>
</feature>
<feature type="repeat" description="22">
    <location>
        <begin position="394"/>
        <end position="406"/>
    </location>
</feature>
<feature type="repeat" description="23">
    <location>
        <begin position="407"/>
        <end position="419"/>
    </location>
</feature>
<feature type="repeat" description="24">
    <location>
        <begin position="420"/>
        <end position="432"/>
    </location>
</feature>
<feature type="repeat" description="25">
    <location>
        <begin position="433"/>
        <end position="445"/>
    </location>
</feature>
<feature type="repeat" description="26">
    <location>
        <begin position="446"/>
        <end position="458"/>
    </location>
</feature>
<feature type="repeat" description="27">
    <location>
        <begin position="459"/>
        <end position="471"/>
    </location>
</feature>
<feature type="repeat" description="28">
    <location>
        <begin position="472"/>
        <end position="484"/>
    </location>
</feature>
<feature type="repeat" description="29">
    <location>
        <begin position="485"/>
        <end position="497"/>
    </location>
</feature>
<feature type="repeat" description="30">
    <location>
        <begin position="498"/>
        <end position="510"/>
    </location>
</feature>
<feature type="repeat" description="31">
    <location>
        <begin position="511"/>
        <end position="523"/>
    </location>
</feature>
<feature type="repeat" description="32">
    <location>
        <begin position="524"/>
        <end position="536"/>
    </location>
</feature>
<feature type="region of interest" description="Disordered" evidence="2">
    <location>
        <begin position="70"/>
        <end position="542"/>
    </location>
</feature>
<feature type="region of interest" description="32 X 13 AA tandem repeats of D-D-A-T-S-E-A-A-T-G-P-S-G">
    <location>
        <begin position="121"/>
        <end position="536"/>
    </location>
</feature>
<feature type="compositionally biased region" description="Polar residues" evidence="2">
    <location>
        <begin position="78"/>
        <end position="95"/>
    </location>
</feature>
<feature type="compositionally biased region" description="Basic and acidic residues" evidence="2">
    <location>
        <begin position="97"/>
        <end position="106"/>
    </location>
</feature>
<feature type="compositionally biased region" description="Low complexity" evidence="2">
    <location>
        <begin position="107"/>
        <end position="116"/>
    </location>
</feature>
<feature type="glycosylation site" description="O-linked (GalNAc...) threonine">
    <location>
        <position position="124"/>
    </location>
</feature>
<feature type="glycosylation site" description="O-linked (GalNAc...) serine">
    <location>
        <position position="125"/>
    </location>
</feature>
<feature type="glycosylation site" description="O-linked (GalNAc...) threonine">
    <location>
        <position position="129"/>
    </location>
</feature>
<feature type="glycosylation site" description="O-linked (GalNAc...) threonine">
    <location>
        <position position="137"/>
    </location>
</feature>
<feature type="glycosylation site" description="O-linked (GalNAc...) serine">
    <location>
        <position position="138"/>
    </location>
</feature>
<feature type="glycosylation site" description="O-linked (GalNAc...) threonine">
    <location>
        <position position="142"/>
    </location>
</feature>
<feature type="glycosylation site" description="O-linked (GalNAc...) threonine">
    <location>
        <position position="150"/>
    </location>
</feature>
<feature type="glycosylation site" description="O-linked (GalNAc...) serine">
    <location>
        <position position="151"/>
    </location>
</feature>
<feature type="glycosylation site" description="O-linked (GalNAc...) threonine">
    <location>
        <position position="155"/>
    </location>
</feature>
<feature type="glycosylation site" description="O-linked (GalNAc...) threonine">
    <location>
        <position position="163"/>
    </location>
</feature>
<feature type="glycosylation site" description="O-linked (GalNAc...) serine">
    <location>
        <position position="164"/>
    </location>
</feature>
<feature type="glycosylation site" description="O-linked (GalNAc...) threonine">
    <location>
        <position position="168"/>
    </location>
</feature>
<feature type="glycosylation site" description="O-linked (GalNAc...) threonine">
    <location>
        <position position="176"/>
    </location>
</feature>
<feature type="glycosylation site" description="O-linked (GalNAc...) serine">
    <location>
        <position position="177"/>
    </location>
</feature>
<feature type="glycosylation site" description="O-linked (GalNAc...) threonine">
    <location>
        <position position="181"/>
    </location>
</feature>
<feature type="glycosylation site" description="O-linked (GalNAc...) threonine">
    <location>
        <position position="189"/>
    </location>
</feature>
<feature type="glycosylation site" description="O-linked (GalNAc...) serine">
    <location>
        <position position="190"/>
    </location>
</feature>
<feature type="glycosylation site" description="O-linked (GalNAc...) threonine">
    <location>
        <position position="194"/>
    </location>
</feature>
<feature type="glycosylation site" description="O-linked (GalNAc...) threonine">
    <location>
        <position position="202"/>
    </location>
</feature>
<feature type="glycosylation site" description="O-linked (GalNAc...) serine">
    <location>
        <position position="203"/>
    </location>
</feature>
<feature type="glycosylation site" description="O-linked (GalNAc...) threonine">
    <location>
        <position position="207"/>
    </location>
</feature>
<feature type="glycosylation site" description="O-linked (GalNAc...) threonine">
    <location>
        <position position="215"/>
    </location>
</feature>
<feature type="glycosylation site" description="O-linked (GalNAc...) serine">
    <location>
        <position position="216"/>
    </location>
</feature>
<feature type="glycosylation site" description="O-linked (GalNAc...) threonine">
    <location>
        <position position="220"/>
    </location>
</feature>
<feature type="glycosylation site" description="O-linked (GalNAc...) threonine">
    <location>
        <position position="228"/>
    </location>
</feature>
<feature type="glycosylation site" description="O-linked (GalNAc...) serine">
    <location>
        <position position="229"/>
    </location>
</feature>
<feature type="glycosylation site" description="O-linked (GalNAc...) threonine">
    <location>
        <position position="233"/>
    </location>
</feature>
<feature type="glycosylation site" description="O-linked (GalNAc...) threonine">
    <location>
        <position position="241"/>
    </location>
</feature>
<feature type="glycosylation site" description="O-linked (GalNAc...) serine">
    <location>
        <position position="242"/>
    </location>
</feature>
<feature type="glycosylation site" description="O-linked (GalNAc...) threonine">
    <location>
        <position position="246"/>
    </location>
</feature>
<feature type="glycosylation site" description="O-linked (GalNAc...) threonine">
    <location>
        <position position="254"/>
    </location>
</feature>
<feature type="glycosylation site" description="O-linked (GalNAc...) serine">
    <location>
        <position position="255"/>
    </location>
</feature>
<feature type="glycosylation site" description="O-linked (GalNAc...) threonine">
    <location>
        <position position="259"/>
    </location>
</feature>
<feature type="glycosylation site" description="O-linked (GalNAc...) threonine">
    <location>
        <position position="267"/>
    </location>
</feature>
<feature type="glycosylation site" description="O-linked (GalNAc...) serine">
    <location>
        <position position="268"/>
    </location>
</feature>
<feature type="glycosylation site" description="O-linked (GalNAc...) threonine">
    <location>
        <position position="272"/>
    </location>
</feature>
<feature type="glycosylation site" description="O-linked (GalNAc...) threonine">
    <location>
        <position position="280"/>
    </location>
</feature>
<feature type="glycosylation site" description="O-linked (GalNAc...) serine">
    <location>
        <position position="281"/>
    </location>
</feature>
<feature type="glycosylation site" description="O-linked (GalNAc...) threonine">
    <location>
        <position position="285"/>
    </location>
</feature>
<feature type="glycosylation site" description="O-linked (GalNAc...) threonine">
    <location>
        <position position="293"/>
    </location>
</feature>
<feature type="glycosylation site" description="O-linked (GalNAc...) serine">
    <location>
        <position position="294"/>
    </location>
</feature>
<feature type="glycosylation site" description="O-linked (GalNAc...) threonine">
    <location>
        <position position="298"/>
    </location>
</feature>
<feature type="glycosylation site" description="O-linked (GalNAc...) threonine">
    <location>
        <position position="306"/>
    </location>
</feature>
<feature type="glycosylation site" description="O-linked (GalNAc...) serine">
    <location>
        <position position="307"/>
    </location>
</feature>
<feature type="glycosylation site" description="O-linked (GalNAc...) threonine">
    <location>
        <position position="311"/>
    </location>
</feature>
<feature type="glycosylation site" description="O-linked (GalNAc...) threonine">
    <location>
        <position position="319"/>
    </location>
</feature>
<feature type="glycosylation site" description="O-linked (GalNAc...) serine">
    <location>
        <position position="320"/>
    </location>
</feature>
<feature type="glycosylation site" description="O-linked (GalNAc...) threonine">
    <location>
        <position position="324"/>
    </location>
</feature>
<feature type="glycosylation site" description="O-linked (GalNAc...) threonine">
    <location>
        <position position="332"/>
    </location>
</feature>
<feature type="glycosylation site" description="O-linked (GalNAc...) serine">
    <location>
        <position position="333"/>
    </location>
</feature>
<feature type="glycosylation site" description="O-linked (GalNAc...) threonine">
    <location>
        <position position="337"/>
    </location>
</feature>
<feature type="glycosylation site" description="O-linked (GalNAc...) threonine">
    <location>
        <position position="345"/>
    </location>
</feature>
<feature type="glycosylation site" description="O-linked (GalNAc...) serine">
    <location>
        <position position="346"/>
    </location>
</feature>
<feature type="glycosylation site" description="O-linked (GalNAc...) threonine">
    <location>
        <position position="350"/>
    </location>
</feature>
<feature type="glycosylation site" description="O-linked (GalNAc...) threonine">
    <location>
        <position position="358"/>
    </location>
</feature>
<feature type="glycosylation site" description="O-linked (GalNAc...) serine">
    <location>
        <position position="359"/>
    </location>
</feature>
<feature type="glycosylation site" description="O-linked (GalNAc...) threonine">
    <location>
        <position position="363"/>
    </location>
</feature>
<feature type="glycosylation site" description="O-linked (GalNAc...) threonine">
    <location>
        <position position="371"/>
    </location>
</feature>
<feature type="glycosylation site" description="O-linked (GalNAc...) serine">
    <location>
        <position position="372"/>
    </location>
</feature>
<feature type="glycosylation site" description="O-linked (GalNAc...) threonine">
    <location>
        <position position="376"/>
    </location>
</feature>
<feature type="glycosylation site" description="O-linked (GalNAc...) threonine">
    <location>
        <position position="384"/>
    </location>
</feature>
<feature type="glycosylation site" description="O-linked (GalNAc...) serine">
    <location>
        <position position="385"/>
    </location>
</feature>
<feature type="glycosylation site" description="O-linked (GalNAc...) threonine">
    <location>
        <position position="389"/>
    </location>
</feature>
<feature type="glycosylation site" description="O-linked (GalNAc...) threonine">
    <location>
        <position position="397"/>
    </location>
</feature>
<feature type="glycosylation site" description="O-linked (GalNAc...) serine">
    <location>
        <position position="398"/>
    </location>
</feature>
<feature type="glycosylation site" description="O-linked (GalNAc...) threonine">
    <location>
        <position position="402"/>
    </location>
</feature>
<feature type="glycosylation site" description="O-linked (GalNAc...) threonine">
    <location>
        <position position="410"/>
    </location>
</feature>
<feature type="glycosylation site" description="O-linked (GalNAc...) serine">
    <location>
        <position position="411"/>
    </location>
</feature>
<feature type="glycosylation site" description="O-linked (GalNAc...) threonine">
    <location>
        <position position="415"/>
    </location>
</feature>
<feature type="glycosylation site" description="O-linked (GalNAc...) threonine">
    <location>
        <position position="423"/>
    </location>
</feature>
<feature type="glycosylation site" description="O-linked (GalNAc...) serine">
    <location>
        <position position="424"/>
    </location>
</feature>
<feature type="glycosylation site" description="O-linked (GalNAc...) threonine">
    <location>
        <position position="428"/>
    </location>
</feature>
<feature type="glycosylation site" description="O-linked (GalNAc...) threonine">
    <location>
        <position position="436"/>
    </location>
</feature>
<feature type="glycosylation site" description="O-linked (GalNAc...) serine">
    <location>
        <position position="437"/>
    </location>
</feature>
<feature type="glycosylation site" description="O-linked (GalNAc...) threonine">
    <location>
        <position position="441"/>
    </location>
</feature>
<feature type="glycosylation site" description="O-linked (GalNAc...) threonine">
    <location>
        <position position="449"/>
    </location>
</feature>
<feature type="glycosylation site" description="O-linked (GalNAc...) serine">
    <location>
        <position position="450"/>
    </location>
</feature>
<feature type="glycosylation site" description="O-linked (GalNAc...) threonine">
    <location>
        <position position="454"/>
    </location>
</feature>
<feature type="glycosylation site" description="O-linked (GalNAc...) threonine">
    <location>
        <position position="462"/>
    </location>
</feature>
<feature type="glycosylation site" description="O-linked (GalNAc...) serine">
    <location>
        <position position="463"/>
    </location>
</feature>
<feature type="glycosylation site" description="O-linked (GalNAc...) threonine">
    <location>
        <position position="467"/>
    </location>
</feature>
<feature type="glycosylation site" description="O-linked (GalNAc...) threonine">
    <location>
        <position position="475"/>
    </location>
</feature>
<feature type="glycosylation site" description="O-linked (GalNAc...) serine">
    <location>
        <position position="476"/>
    </location>
</feature>
<feature type="glycosylation site" description="O-linked (GalNAc...) threonine">
    <location>
        <position position="480"/>
    </location>
</feature>
<feature type="glycosylation site" description="O-linked (GalNAc...) threonine">
    <location>
        <position position="488"/>
    </location>
</feature>
<feature type="glycosylation site" description="O-linked (GalNAc...) serine">
    <location>
        <position position="489"/>
    </location>
</feature>
<feature type="glycosylation site" description="O-linked (GalNAc...) threonine">
    <location>
        <position position="493"/>
    </location>
</feature>
<feature type="glycosylation site" description="O-linked (GalNAc...) threonine">
    <location>
        <position position="501"/>
    </location>
</feature>
<feature type="glycosylation site" description="O-linked (GalNAc...) serine">
    <location>
        <position position="502"/>
    </location>
</feature>
<feature type="glycosylation site" description="O-linked (GalNAc...) threonine">
    <location>
        <position position="506"/>
    </location>
</feature>
<feature type="glycosylation site" description="O-linked (GalNAc...) threonine">
    <location>
        <position position="514"/>
    </location>
</feature>
<feature type="glycosylation site" description="O-linked (GalNAc...) serine">
    <location>
        <position position="515"/>
    </location>
</feature>
<feature type="glycosylation site" description="O-linked (GalNAc...) threonine">
    <location>
        <position position="519"/>
    </location>
</feature>
<feature type="glycosylation site" description="O-linked (GalNAc...) threonine">
    <location>
        <position position="527"/>
    </location>
</feature>
<feature type="glycosylation site" description="O-linked (GalNAc...) serine">
    <location>
        <position position="528"/>
    </location>
</feature>
<feature type="glycosylation site" description="O-linked (GalNAc...) threonine">
    <location>
        <position position="532"/>
    </location>
</feature>
<protein>
    <recommendedName>
        <fullName>Polysialoglycoprotein</fullName>
        <shortName>PSGP</shortName>
    </recommendedName>
    <alternativeName>
        <fullName>Apopolysialoglycoprotein</fullName>
        <shortName>apoPSGP</shortName>
    </alternativeName>
</protein>
<accession>P12027</accession>
<sequence>MIMGGVRELLLVVMTVGVVKVSCYPVGKSQKQDQVSLQRRLGELSSNDVSIVHALALLRSIGSDAKQAREEYLETNEVESQASPNHGSSPANDALSSEEKLRRVSSDDAATSEAATGPSGDDATSEAATGPSGDDATSEAATGPSGDDATSEAATGPSGDDATSEAATGPSGDDATSEAATGPSGDDATSEAATGPSGDDATSEAATGPSGDDATSEAATGPSGDDATSEAATGPSGDDATSEAATGPSGDDATSEAATGPSGDDATSEAATGPSGDDATSEAATGPSGDDATSEAATGPSGDDATSEAATGPSGDDATSEAATGPSGDDATSEAATGPSGDDATSEAATGPSGDDATSEAATGPSGDDATSEAATGPSGDDATSEAATGPSGDDATSEAATGPSGDDATSEAATGPSGDDATSEAATGPSGDDATSEAATGPSGDDATSEAATGPSGDDATSEAATGPSGDDATSEAATGPSGDDATSEAATGPSGDDATSEAATGPSGDDATSEAATGPSGDDATSEAATGPSGDDAMDI</sequence>
<proteinExistence type="evidence at protein level"/>